<accession>Q0C0C9</accession>
<feature type="chain" id="PRO_1000061721" description="PKHD-type hydroxylase HNE_2117">
    <location>
        <begin position="1"/>
        <end position="226"/>
    </location>
</feature>
<feature type="domain" description="Fe2OG dioxygenase" evidence="1">
    <location>
        <begin position="78"/>
        <end position="178"/>
    </location>
</feature>
<feature type="binding site" evidence="1">
    <location>
        <position position="96"/>
    </location>
    <ligand>
        <name>Fe cation</name>
        <dbReference type="ChEBI" id="CHEBI:24875"/>
    </ligand>
</feature>
<feature type="binding site" evidence="1">
    <location>
        <position position="98"/>
    </location>
    <ligand>
        <name>Fe cation</name>
        <dbReference type="ChEBI" id="CHEBI:24875"/>
    </ligand>
</feature>
<feature type="binding site" evidence="1">
    <location>
        <position position="159"/>
    </location>
    <ligand>
        <name>Fe cation</name>
        <dbReference type="ChEBI" id="CHEBI:24875"/>
    </ligand>
</feature>
<feature type="binding site" evidence="1">
    <location>
        <position position="169"/>
    </location>
    <ligand>
        <name>2-oxoglutarate</name>
        <dbReference type="ChEBI" id="CHEBI:16810"/>
    </ligand>
</feature>
<gene>
    <name type="ordered locus">HNE_2117</name>
</gene>
<name>Y2117_HYPNA</name>
<proteinExistence type="inferred from homology"/>
<dbReference type="EC" id="1.14.11.-" evidence="1"/>
<dbReference type="EMBL" id="CP000158">
    <property type="protein sequence ID" value="ABI76931.1"/>
    <property type="molecule type" value="Genomic_DNA"/>
</dbReference>
<dbReference type="RefSeq" id="WP_011647112.1">
    <property type="nucleotide sequence ID" value="NC_008358.1"/>
</dbReference>
<dbReference type="SMR" id="Q0C0C9"/>
<dbReference type="STRING" id="228405.HNE_2117"/>
<dbReference type="KEGG" id="hne:HNE_2117"/>
<dbReference type="eggNOG" id="COG3128">
    <property type="taxonomic scope" value="Bacteria"/>
</dbReference>
<dbReference type="HOGENOM" id="CLU_106663_0_0_5"/>
<dbReference type="Proteomes" id="UP000001959">
    <property type="component" value="Chromosome"/>
</dbReference>
<dbReference type="GO" id="GO:0016706">
    <property type="term" value="F:2-oxoglutarate-dependent dioxygenase activity"/>
    <property type="evidence" value="ECO:0007669"/>
    <property type="project" value="UniProtKB-UniRule"/>
</dbReference>
<dbReference type="GO" id="GO:0005506">
    <property type="term" value="F:iron ion binding"/>
    <property type="evidence" value="ECO:0007669"/>
    <property type="project" value="UniProtKB-UniRule"/>
</dbReference>
<dbReference type="GO" id="GO:0031418">
    <property type="term" value="F:L-ascorbic acid binding"/>
    <property type="evidence" value="ECO:0007669"/>
    <property type="project" value="UniProtKB-KW"/>
</dbReference>
<dbReference type="GO" id="GO:0006974">
    <property type="term" value="P:DNA damage response"/>
    <property type="evidence" value="ECO:0007669"/>
    <property type="project" value="TreeGrafter"/>
</dbReference>
<dbReference type="GO" id="GO:0006879">
    <property type="term" value="P:intracellular iron ion homeostasis"/>
    <property type="evidence" value="ECO:0007669"/>
    <property type="project" value="TreeGrafter"/>
</dbReference>
<dbReference type="Gene3D" id="2.60.120.620">
    <property type="entry name" value="q2cbj1_9rhob like domain"/>
    <property type="match status" value="1"/>
</dbReference>
<dbReference type="Gene3D" id="4.10.860.20">
    <property type="entry name" value="Rabenosyn, Rab binding domain"/>
    <property type="match status" value="1"/>
</dbReference>
<dbReference type="HAMAP" id="MF_00657">
    <property type="entry name" value="Hydroxyl_YbiX"/>
    <property type="match status" value="1"/>
</dbReference>
<dbReference type="InterPro" id="IPR005123">
    <property type="entry name" value="Oxoglu/Fe-dep_dioxygenase_dom"/>
</dbReference>
<dbReference type="InterPro" id="IPR041097">
    <property type="entry name" value="PKHD_C"/>
</dbReference>
<dbReference type="InterPro" id="IPR023550">
    <property type="entry name" value="PKHD_hydroxylase"/>
</dbReference>
<dbReference type="InterPro" id="IPR006620">
    <property type="entry name" value="Pro_4_hyd_alph"/>
</dbReference>
<dbReference type="InterPro" id="IPR044862">
    <property type="entry name" value="Pro_4_hyd_alph_FE2OG_OXY"/>
</dbReference>
<dbReference type="NCBIfam" id="NF003974">
    <property type="entry name" value="PRK05467.1-3"/>
    <property type="match status" value="1"/>
</dbReference>
<dbReference type="NCBIfam" id="NF003975">
    <property type="entry name" value="PRK05467.1-4"/>
    <property type="match status" value="1"/>
</dbReference>
<dbReference type="PANTHER" id="PTHR41536">
    <property type="entry name" value="PKHD-TYPE HYDROXYLASE YBIX"/>
    <property type="match status" value="1"/>
</dbReference>
<dbReference type="PANTHER" id="PTHR41536:SF1">
    <property type="entry name" value="PKHD-TYPE HYDROXYLASE YBIX"/>
    <property type="match status" value="1"/>
</dbReference>
<dbReference type="Pfam" id="PF13640">
    <property type="entry name" value="2OG-FeII_Oxy_3"/>
    <property type="match status" value="1"/>
</dbReference>
<dbReference type="Pfam" id="PF18331">
    <property type="entry name" value="PKHD_C"/>
    <property type="match status" value="1"/>
</dbReference>
<dbReference type="SMART" id="SM00702">
    <property type="entry name" value="P4Hc"/>
    <property type="match status" value="1"/>
</dbReference>
<dbReference type="PROSITE" id="PS51471">
    <property type="entry name" value="FE2OG_OXY"/>
    <property type="match status" value="1"/>
</dbReference>
<sequence>MLLHIPEVLNGQELATLRETLAGADWQDGAATAGAQAVRVKQNLQLPAGAPDARPMGELVKAALLRHPLFQSAALPHTVLTPRFNRYEGGGHYGNHVDSAIHADPFLGVSVRTDVSTTVFLNDPEDYDGGELIVEDTYGVHEVKLPAGDAILYPATSLHRVESVTRGTRLASFLWTQSRVRDDARRGMLFQLDMTILSLRGKLADAPEVVALTGHYHNLLRQWADA</sequence>
<organism>
    <name type="scientific">Hyphomonas neptunium (strain ATCC 15444)</name>
    <dbReference type="NCBI Taxonomy" id="228405"/>
    <lineage>
        <taxon>Bacteria</taxon>
        <taxon>Pseudomonadati</taxon>
        <taxon>Pseudomonadota</taxon>
        <taxon>Alphaproteobacteria</taxon>
        <taxon>Hyphomonadales</taxon>
        <taxon>Hyphomonadaceae</taxon>
        <taxon>Hyphomonas</taxon>
    </lineage>
</organism>
<evidence type="ECO:0000255" key="1">
    <source>
        <dbReference type="HAMAP-Rule" id="MF_00657"/>
    </source>
</evidence>
<reference key="1">
    <citation type="journal article" date="2006" name="J. Bacteriol.">
        <title>Comparative genomic evidence for a close relationship between the dimorphic prosthecate bacteria Hyphomonas neptunium and Caulobacter crescentus.</title>
        <authorList>
            <person name="Badger J.H."/>
            <person name="Hoover T.R."/>
            <person name="Brun Y.V."/>
            <person name="Weiner R.M."/>
            <person name="Laub M.T."/>
            <person name="Alexandre G."/>
            <person name="Mrazek J."/>
            <person name="Ren Q."/>
            <person name="Paulsen I.T."/>
            <person name="Nelson K.E."/>
            <person name="Khouri H.M."/>
            <person name="Radune D."/>
            <person name="Sosa J."/>
            <person name="Dodson R.J."/>
            <person name="Sullivan S.A."/>
            <person name="Rosovitz M.J."/>
            <person name="Madupu R."/>
            <person name="Brinkac L.M."/>
            <person name="Durkin A.S."/>
            <person name="Daugherty S.C."/>
            <person name="Kothari S.P."/>
            <person name="Giglio M.G."/>
            <person name="Zhou L."/>
            <person name="Haft D.H."/>
            <person name="Selengut J.D."/>
            <person name="Davidsen T.M."/>
            <person name="Yang Q."/>
            <person name="Zafar N."/>
            <person name="Ward N.L."/>
        </authorList>
    </citation>
    <scope>NUCLEOTIDE SEQUENCE [LARGE SCALE GENOMIC DNA]</scope>
    <source>
        <strain>ATCC 15444</strain>
    </source>
</reference>
<comment type="cofactor">
    <cofactor evidence="1">
        <name>Fe(2+)</name>
        <dbReference type="ChEBI" id="CHEBI:29033"/>
    </cofactor>
    <text evidence="1">Binds 1 Fe(2+) ion per subunit.</text>
</comment>
<comment type="cofactor">
    <cofactor evidence="1">
        <name>L-ascorbate</name>
        <dbReference type="ChEBI" id="CHEBI:38290"/>
    </cofactor>
</comment>
<keyword id="KW-0223">Dioxygenase</keyword>
<keyword id="KW-0408">Iron</keyword>
<keyword id="KW-0479">Metal-binding</keyword>
<keyword id="KW-0560">Oxidoreductase</keyword>
<keyword id="KW-1185">Reference proteome</keyword>
<keyword id="KW-0847">Vitamin C</keyword>
<protein>
    <recommendedName>
        <fullName evidence="1">PKHD-type hydroxylase HNE_2117</fullName>
        <ecNumber evidence="1">1.14.11.-</ecNumber>
    </recommendedName>
</protein>